<sequence>MQSSQLLPLGSLLLSFATPLAQADALHDQASALFKPIPEQVTELRGQPISEQQRELGKKLFFDPRLSRSHVLSCNTCHNVGTGGADNVPTSVGHGWQKGPRNSPTVFNAVFNAAQFWDGRAKDLGEQAKGPIQNSVEMHSTPQLVEQTLGSIPEYVDAFRKAFPKAGKPVSFDNMALAIEAYEATLVTPDSPFDLYLKGDDKALDAQQKKGLKAFMDSGCSACHNGINLGGQAYFPFGLVKKPDASVLPSGDKGRFAVTKTQSDEYVFRAAPLRNVALTAPYFHSGQVWELKDAVAIMGNAQLGKQLAPDDVENIVAFLHSLSGKQPRVEYPLLPASTETTPRPAE</sequence>
<organism>
    <name type="scientific">Pseudomonas aeruginosa (strain ATCC 15692 / DSM 22644 / CIP 104116 / JCM 14847 / LMG 12228 / 1C / PRS 101 / PAO1)</name>
    <dbReference type="NCBI Taxonomy" id="208964"/>
    <lineage>
        <taxon>Bacteria</taxon>
        <taxon>Pseudomonadati</taxon>
        <taxon>Pseudomonadota</taxon>
        <taxon>Gammaproteobacteria</taxon>
        <taxon>Pseudomonadales</taxon>
        <taxon>Pseudomonadaceae</taxon>
        <taxon>Pseudomonas</taxon>
    </lineage>
</organism>
<dbReference type="EC" id="1.11.1.5" evidence="9"/>
<dbReference type="EMBL" id="U23766">
    <property type="protein sequence ID" value="AAC43378.1"/>
    <property type="molecule type" value="Genomic_DNA"/>
</dbReference>
<dbReference type="EMBL" id="AE004091">
    <property type="protein sequence ID" value="AAG07975.1"/>
    <property type="molecule type" value="Genomic_DNA"/>
</dbReference>
<dbReference type="PIR" id="I53515">
    <property type="entry name" value="I53515"/>
</dbReference>
<dbReference type="RefSeq" id="WP_003094815.1">
    <property type="nucleotide sequence ID" value="NZ_QZGE01000004.1"/>
</dbReference>
<dbReference type="PDB" id="1EB7">
    <property type="method" value="X-ray"/>
    <property type="resolution" value="2.40 A"/>
    <property type="chains" value="A=24-346"/>
</dbReference>
<dbReference type="PDB" id="2VHD">
    <property type="method" value="X-ray"/>
    <property type="resolution" value="2.30 A"/>
    <property type="chains" value="A/B=24-346"/>
</dbReference>
<dbReference type="PDBsum" id="1EB7"/>
<dbReference type="PDBsum" id="2VHD"/>
<dbReference type="SMR" id="P14532"/>
<dbReference type="FunCoup" id="P14532">
    <property type="interactions" value="179"/>
</dbReference>
<dbReference type="STRING" id="208964.PA4587"/>
<dbReference type="DrugBank" id="DB03317">
    <property type="generic name" value="Ferroheme C"/>
</dbReference>
<dbReference type="PeroxiBase" id="3543">
    <property type="entry name" value="PaerDiHCcP"/>
</dbReference>
<dbReference type="PaxDb" id="208964-PA4587"/>
<dbReference type="KEGG" id="pae:PA4587"/>
<dbReference type="PATRIC" id="fig|208964.12.peg.4801"/>
<dbReference type="PseudoCAP" id="PA4587"/>
<dbReference type="HOGENOM" id="CLU_034652_1_1_6"/>
<dbReference type="InParanoid" id="P14532"/>
<dbReference type="OrthoDB" id="9805202at2"/>
<dbReference type="PhylomeDB" id="P14532"/>
<dbReference type="BioCyc" id="MetaCyc:MONOMER-17891"/>
<dbReference type="BioCyc" id="PAER208964:G1FZ6-4681-MONOMER"/>
<dbReference type="BRENDA" id="1.11.1.5">
    <property type="organism ID" value="5087"/>
</dbReference>
<dbReference type="EvolutionaryTrace" id="P14532"/>
<dbReference type="Proteomes" id="UP000002438">
    <property type="component" value="Chromosome"/>
</dbReference>
<dbReference type="GO" id="GO:0042597">
    <property type="term" value="C:periplasmic space"/>
    <property type="evidence" value="ECO:0007669"/>
    <property type="project" value="UniProtKB-SubCell"/>
</dbReference>
<dbReference type="GO" id="GO:0004130">
    <property type="term" value="F:cytochrome-c peroxidase activity"/>
    <property type="evidence" value="ECO:0000314"/>
    <property type="project" value="PseudoCAP"/>
</dbReference>
<dbReference type="GO" id="GO:0009055">
    <property type="term" value="F:electron transfer activity"/>
    <property type="evidence" value="ECO:0007669"/>
    <property type="project" value="InterPro"/>
</dbReference>
<dbReference type="GO" id="GO:0020037">
    <property type="term" value="F:heme binding"/>
    <property type="evidence" value="ECO:0007669"/>
    <property type="project" value="InterPro"/>
</dbReference>
<dbReference type="GO" id="GO:0046872">
    <property type="term" value="F:metal ion binding"/>
    <property type="evidence" value="ECO:0007669"/>
    <property type="project" value="UniProtKB-KW"/>
</dbReference>
<dbReference type="FunFam" id="1.10.760.10:FF:000020">
    <property type="entry name" value="Cytochrome c peroxidase"/>
    <property type="match status" value="1"/>
</dbReference>
<dbReference type="Gene3D" id="1.10.760.10">
    <property type="entry name" value="Cytochrome c-like domain"/>
    <property type="match status" value="2"/>
</dbReference>
<dbReference type="InterPro" id="IPR009056">
    <property type="entry name" value="Cyt_c-like_dom"/>
</dbReference>
<dbReference type="InterPro" id="IPR036909">
    <property type="entry name" value="Cyt_c-like_dom_sf"/>
</dbReference>
<dbReference type="InterPro" id="IPR051395">
    <property type="entry name" value="Cytochrome_c_Peroxidase/MauG"/>
</dbReference>
<dbReference type="InterPro" id="IPR004852">
    <property type="entry name" value="Di-haem_cyt_c_peroxidsae"/>
</dbReference>
<dbReference type="InterPro" id="IPR026259">
    <property type="entry name" value="MauG/Cytc_peroxidase"/>
</dbReference>
<dbReference type="PANTHER" id="PTHR30600">
    <property type="entry name" value="CYTOCHROME C PEROXIDASE-RELATED"/>
    <property type="match status" value="1"/>
</dbReference>
<dbReference type="PANTHER" id="PTHR30600:SF7">
    <property type="entry name" value="CYTOCHROME C PEROXIDASE-RELATED"/>
    <property type="match status" value="1"/>
</dbReference>
<dbReference type="Pfam" id="PF03150">
    <property type="entry name" value="CCP_MauG"/>
    <property type="match status" value="1"/>
</dbReference>
<dbReference type="Pfam" id="PF00034">
    <property type="entry name" value="Cytochrom_C"/>
    <property type="match status" value="1"/>
</dbReference>
<dbReference type="PIRSF" id="PIRSF000294">
    <property type="entry name" value="Cytochrome-c_peroxidase"/>
    <property type="match status" value="1"/>
</dbReference>
<dbReference type="SUPFAM" id="SSF46626">
    <property type="entry name" value="Cytochrome c"/>
    <property type="match status" value="2"/>
</dbReference>
<dbReference type="PROSITE" id="PS51007">
    <property type="entry name" value="CYTC"/>
    <property type="match status" value="2"/>
</dbReference>
<evidence type="ECO:0000269" key="1">
    <source>
    </source>
</evidence>
<evidence type="ECO:0000269" key="2">
    <source>
    </source>
</evidence>
<evidence type="ECO:0000269" key="3">
    <source>
    </source>
</evidence>
<evidence type="ECO:0000269" key="4">
    <source>
    </source>
</evidence>
<evidence type="ECO:0000269" key="5">
    <source>
    </source>
</evidence>
<evidence type="ECO:0000303" key="6">
    <source>
    </source>
</evidence>
<evidence type="ECO:0000303" key="7">
    <source>
    </source>
</evidence>
<evidence type="ECO:0000305" key="8"/>
<evidence type="ECO:0000305" key="9">
    <source>
    </source>
</evidence>
<evidence type="ECO:0000305" key="10">
    <source>
    </source>
</evidence>
<evidence type="ECO:0007744" key="11">
    <source>
        <dbReference type="PDB" id="1EB7"/>
    </source>
</evidence>
<evidence type="ECO:0007829" key="12">
    <source>
        <dbReference type="PDB" id="1EB7"/>
    </source>
</evidence>
<evidence type="ECO:0007829" key="13">
    <source>
        <dbReference type="PDB" id="2VHD"/>
    </source>
</evidence>
<name>CCPR_PSEAE</name>
<proteinExistence type="evidence at protein level"/>
<comment type="function">
    <text>Catalyzes the peroxidative oxidation of azurin and cytochrome c551. Likely to provide protection against toxic peroxides.</text>
</comment>
<comment type="catalytic activity">
    <reaction evidence="9">
        <text>2 Fe(II)-[cytochrome c] + H2O2 + 2 H(+) = 2 Fe(III)-[cytochrome c] + 2 H2O</text>
        <dbReference type="Rhea" id="RHEA:16581"/>
        <dbReference type="Rhea" id="RHEA-COMP:10350"/>
        <dbReference type="Rhea" id="RHEA-COMP:14399"/>
        <dbReference type="ChEBI" id="CHEBI:15377"/>
        <dbReference type="ChEBI" id="CHEBI:15378"/>
        <dbReference type="ChEBI" id="CHEBI:16240"/>
        <dbReference type="ChEBI" id="CHEBI:29033"/>
        <dbReference type="ChEBI" id="CHEBI:29034"/>
        <dbReference type="EC" id="1.11.1.5"/>
    </reaction>
</comment>
<comment type="cofactor">
    <cofactor evidence="2">
        <name>heme c</name>
        <dbReference type="ChEBI" id="CHEBI:61717"/>
    </cofactor>
    <text evidence="9">Binds 2 heme c groups covalently. Heme 1 is low-potential (-330 mV) with 2 His axial ligands and functions in the peroxidase reaction, while heme 2 is high potential (+320 mV) with His and Met axial ligands and functions to feed electrons from electron-shuttle proteins such as cytochrome c and azurin.</text>
</comment>
<comment type="subcellular location">
    <subcellularLocation>
        <location evidence="8">Periplasm</location>
    </subcellularLocation>
</comment>
<comment type="domain">
    <text evidence="5">Organized into two domains, each containing a covalent c-heme in a structure reminiscent of class 1 cytochromes c. The domains are related by a quasi-twofold axis. The domain interface contains a calcium-binding site with an unusual set of ligands.</text>
</comment>
<comment type="PTM">
    <text evidence="4 5">Binds 2 heme groups per subunit (PubMed:8591033). Sequencing of the whole protein indicates about 20% starts on Val-247 (PubMed:8543038).</text>
</comment>
<comment type="mass spectrometry">
    <text>Mature protein with 2 bound heme groups.</text>
</comment>
<gene>
    <name type="primary">ccpA</name>
    <name type="ordered locus">PA4587</name>
</gene>
<protein>
    <recommendedName>
        <fullName>Cytochrome c551 peroxidase</fullName>
        <shortName evidence="7">CCP</shortName>
        <shortName evidence="6">Cytochrome c peroxidase</shortName>
        <ecNumber evidence="9">1.11.1.5</ecNumber>
    </recommendedName>
</protein>
<keyword id="KW-0002">3D-structure</keyword>
<keyword id="KW-0903">Direct protein sequencing</keyword>
<keyword id="KW-0249">Electron transport</keyword>
<keyword id="KW-0349">Heme</keyword>
<keyword id="KW-0408">Iron</keyword>
<keyword id="KW-0479">Metal-binding</keyword>
<keyword id="KW-0560">Oxidoreductase</keyword>
<keyword id="KW-0574">Periplasm</keyword>
<keyword id="KW-0575">Peroxidase</keyword>
<keyword id="KW-1185">Reference proteome</keyword>
<keyword id="KW-0732">Signal</keyword>
<keyword id="KW-0813">Transport</keyword>
<reference key="1">
    <citation type="journal article" date="1995" name="FEBS Lett.">
        <title>Nucleotide sequence encoding the di-haem cytochrome c551 peroxidase from Pseudomonas aeruginosa.</title>
        <authorList>
            <person name="Ridout C.J."/>
            <person name="James R."/>
            <person name="Greenwood C."/>
        </authorList>
    </citation>
    <scope>NUCLEOTIDE SEQUENCE [GENOMIC DNA]</scope>
    <source>
        <strain>ATCC 19429 / NTCC 6750</strain>
    </source>
</reference>
<reference key="2">
    <citation type="journal article" date="2000" name="Nature">
        <title>Complete genome sequence of Pseudomonas aeruginosa PAO1, an opportunistic pathogen.</title>
        <authorList>
            <person name="Stover C.K."/>
            <person name="Pham X.-Q.T."/>
            <person name="Erwin A.L."/>
            <person name="Mizoguchi S.D."/>
            <person name="Warrener P."/>
            <person name="Hickey M.J."/>
            <person name="Brinkman F.S.L."/>
            <person name="Hufnagle W.O."/>
            <person name="Kowalik D.J."/>
            <person name="Lagrou M."/>
            <person name="Garber R.L."/>
            <person name="Goltry L."/>
            <person name="Tolentino E."/>
            <person name="Westbrock-Wadman S."/>
            <person name="Yuan Y."/>
            <person name="Brody L.L."/>
            <person name="Coulter S.N."/>
            <person name="Folger K.R."/>
            <person name="Kas A."/>
            <person name="Larbig K."/>
            <person name="Lim R.M."/>
            <person name="Smith K.A."/>
            <person name="Spencer D.H."/>
            <person name="Wong G.K.-S."/>
            <person name="Wu Z."/>
            <person name="Paulsen I.T."/>
            <person name="Reizer J."/>
            <person name="Saier M.H. Jr."/>
            <person name="Hancock R.E.W."/>
            <person name="Lory S."/>
            <person name="Olson M.V."/>
        </authorList>
    </citation>
    <scope>NUCLEOTIDE SEQUENCE [LARGE SCALE GENOMIC DNA]</scope>
    <source>
        <strain>ATCC 15692 / DSM 22644 / CIP 104116 / JCM 14847 / LMG 12228 / 1C / PRS 101 / PAO1</strain>
    </source>
</reference>
<reference key="3">
    <citation type="journal article" date="1995" name="FEBS Lett.">
        <title>A reinvestigation of the covalent structure of Pseudomonas aeruginosa cytochrome c peroxidase.</title>
        <authorList>
            <person name="Samyn B."/>
            <person name="van Craenenbroeck K."/>
            <person name="de Smet L."/>
            <person name="Vandenberghe I."/>
            <person name="Pettigrew G."/>
            <person name="van Beeumen J."/>
        </authorList>
    </citation>
    <scope>PROTEIN SEQUENCE OF 24-346</scope>
    <scope>MASS SPECTROMETRY</scope>
    <source>
        <strain>ATCC 10145 / DSM 50071 / JCM 5962 / LMG 1242 / NBRC 12689 / NCIMB 8295 / NCTC 10332 / NRRL B-771</strain>
    </source>
</reference>
<reference key="4">
    <citation type="journal article" date="1989" name="FEBS Lett.">
        <title>The primary structure of Pseudomonas cytochrome c peroxidase.</title>
        <authorList>
            <person name="Roennberg M."/>
            <person name="Kalkkinen N."/>
            <person name="Ellfolk N."/>
        </authorList>
    </citation>
    <scope>PROTEIN SEQUENCE OF 24-346</scope>
    <scope>VARIANTS</scope>
</reference>
<reference key="5">
    <citation type="journal article" date="1987" name="Biochim. Biophys. Acta">
        <title>Amino acid sequences of the two heme c-binding sites of Pseudomonas cytochrome-c peroxidase.</title>
        <authorList>
            <person name="Roennberg M."/>
        </authorList>
    </citation>
    <scope>PARTIAL PROTEIN SEQUENCE</scope>
    <scope>COFACTOR</scope>
</reference>
<reference key="6">
    <citation type="journal article" date="1991" name="Biochim. Biophys. Acta">
        <title>Structural and functional features of Pseudomonas cytochrome c peroxidase.</title>
        <authorList>
            <person name="Ellfolk N."/>
            <person name="Roennberg M."/>
            <person name="Oesterlund K."/>
        </authorList>
    </citation>
    <scope>CHARACTERIZATION</scope>
</reference>
<reference evidence="11" key="7">
    <citation type="journal article" date="1995" name="Structure">
        <title>Crystal structure of the di-haem cytochrome c peroxidase from Pseudomonas aeruginosa.</title>
        <authorList>
            <person name="Fulop V."/>
            <person name="Ridout C.J."/>
            <person name="Greenwood C."/>
            <person name="Hajdu J."/>
        </authorList>
    </citation>
    <scope>X-RAY CRYSTALLOGRAPHY (2.4 ANGSTROMS) OF 24-346 IN COMPLEX WITH HEME</scope>
    <scope>DOMAIN</scope>
</reference>
<feature type="signal peptide" evidence="1 4">
    <location>
        <begin position="1"/>
        <end position="23"/>
    </location>
</feature>
<feature type="chain" id="PRO_0000006598" description="Cytochrome c551 peroxidase" evidence="3">
    <location>
        <begin position="24"/>
        <end position="346"/>
    </location>
</feature>
<feature type="binding site" description="covalent" evidence="11">
    <location>
        <position position="74"/>
    </location>
    <ligand>
        <name>heme c</name>
        <dbReference type="ChEBI" id="CHEBI:61717"/>
        <label>1</label>
    </ligand>
</feature>
<feature type="binding site" description="covalent" evidence="11">
    <location>
        <position position="77"/>
    </location>
    <ligand>
        <name>heme c</name>
        <dbReference type="ChEBI" id="CHEBI:61717"/>
        <label>1</label>
    </ligand>
</feature>
<feature type="binding site" description="axial binding residue" evidence="11">
    <location>
        <position position="78"/>
    </location>
    <ligand>
        <name>heme c</name>
        <dbReference type="ChEBI" id="CHEBI:61717"/>
        <label>1</label>
    </ligand>
    <ligandPart>
        <name>Fe</name>
        <dbReference type="ChEBI" id="CHEBI:18248"/>
    </ligandPart>
</feature>
<feature type="binding site" description="covalent" evidence="11">
    <location>
        <position position="220"/>
    </location>
    <ligand>
        <name>heme c</name>
        <dbReference type="ChEBI" id="CHEBI:61717"/>
        <label>2</label>
    </ligand>
</feature>
<feature type="binding site" description="covalent" evidence="11">
    <location>
        <position position="223"/>
    </location>
    <ligand>
        <name>heme c</name>
        <dbReference type="ChEBI" id="CHEBI:61717"/>
        <label>2</label>
    </ligand>
</feature>
<feature type="binding site" description="axial binding residue" evidence="11">
    <location>
        <position position="224"/>
    </location>
    <ligand>
        <name>heme c</name>
        <dbReference type="ChEBI" id="CHEBI:61717"/>
        <label>2</label>
    </ligand>
    <ligandPart>
        <name>Fe</name>
        <dbReference type="ChEBI" id="CHEBI:18248"/>
    </ligandPart>
</feature>
<feature type="binding site" description="axial binding residue">
    <location>
        <position position="284"/>
    </location>
    <ligand>
        <name>heme c</name>
        <dbReference type="ChEBI" id="CHEBI:61717"/>
        <label>1</label>
    </ligand>
    <ligandPart>
        <name>Fe</name>
        <dbReference type="ChEBI" id="CHEBI:18248"/>
    </ligandPart>
</feature>
<feature type="binding site" description="axial binding residue" evidence="11">
    <location>
        <position position="298"/>
    </location>
    <ligand>
        <name>heme c</name>
        <dbReference type="ChEBI" id="CHEBI:61717"/>
        <label>2</label>
    </ligand>
    <ligandPart>
        <name>Fe</name>
        <dbReference type="ChEBI" id="CHEBI:18248"/>
    </ligandPart>
</feature>
<feature type="sequence variant" evidence="10">
    <original>G</original>
    <variation>D</variation>
    <location>
        <position position="81"/>
    </location>
</feature>
<feature type="sequence variant" evidence="10">
    <original>G</original>
    <variation>D</variation>
    <location>
        <position position="83"/>
    </location>
</feature>
<feature type="sequence variant" evidence="10">
    <original>I</original>
    <variation>V</variation>
    <location>
        <position position="152"/>
    </location>
</feature>
<feature type="sequence variant" evidence="10">
    <original>P</original>
    <variation>A</variation>
    <location>
        <position position="164"/>
    </location>
</feature>
<feature type="sequence variant" evidence="10">
    <original>K</original>
    <variation>I</variation>
    <location>
        <position position="198"/>
    </location>
</feature>
<feature type="sequence variant" evidence="10">
    <original>L</original>
    <variation>W</variation>
    <location>
        <position position="334"/>
    </location>
</feature>
<feature type="sequence conflict" description="In Ref. 4; AA sequence." evidence="8" ref="4">
    <original>D</original>
    <variation>G</variation>
    <location>
        <position position="86"/>
    </location>
</feature>
<feature type="sequence conflict" description="In Ref. 4; AA sequence." evidence="8" ref="4">
    <location>
        <position position="93"/>
    </location>
</feature>
<feature type="sequence conflict" description="In Ref. 4; AA sequence." evidence="8" ref="4">
    <original>W</original>
    <variation>G</variation>
    <location>
        <position position="96"/>
    </location>
</feature>
<feature type="sequence conflict" description="In Ref. 4; AA sequence." evidence="8" ref="4">
    <location>
        <begin position="102"/>
        <end position="120"/>
    </location>
</feature>
<feature type="sequence conflict" description="In Ref. 4; AA sequence." evidence="8" ref="4">
    <original>E</original>
    <variation>Q</variation>
    <location>
        <position position="137"/>
    </location>
</feature>
<feature type="sequence conflict" description="In Ref. 3; AA sequence." evidence="8" ref="3">
    <original>M</original>
    <variation>V</variation>
    <location>
        <position position="175"/>
    </location>
</feature>
<feature type="sequence conflict" description="In Ref. 4; AA sequence." evidence="8" ref="4">
    <original>C</original>
    <variation>K</variation>
    <location>
        <position position="223"/>
    </location>
</feature>
<feature type="sequence conflict" description="In Ref. 4; AA sequence." evidence="8" ref="4">
    <location>
        <position position="228"/>
    </location>
</feature>
<feature type="sequence conflict" description="In Ref. 4; AA sequence." evidence="8" ref="4">
    <original>GQ</original>
    <variation>QG</variation>
    <location>
        <begin position="286"/>
        <end position="287"/>
    </location>
</feature>
<feature type="sequence conflict" description="In Ref. 4; AA sequence." evidence="8" ref="4">
    <original>E</original>
    <variation>Q</variation>
    <location>
        <position position="290"/>
    </location>
</feature>
<feature type="helix" evidence="13">
    <location>
        <begin position="25"/>
        <end position="33"/>
    </location>
</feature>
<feature type="helix" evidence="13">
    <location>
        <begin position="51"/>
        <end position="61"/>
    </location>
</feature>
<feature type="helix" evidence="13">
    <location>
        <begin position="64"/>
        <end position="66"/>
    </location>
</feature>
<feature type="strand" evidence="13">
    <location>
        <begin position="67"/>
        <end position="70"/>
    </location>
</feature>
<feature type="helix" evidence="13">
    <location>
        <begin position="74"/>
        <end position="77"/>
    </location>
</feature>
<feature type="helix" evidence="13">
    <location>
        <begin position="80"/>
        <end position="82"/>
    </location>
</feature>
<feature type="strand" evidence="13">
    <location>
        <begin position="88"/>
        <end position="90"/>
    </location>
</feature>
<feature type="helix" evidence="13">
    <location>
        <begin position="94"/>
        <end position="96"/>
    </location>
</feature>
<feature type="helix" evidence="13">
    <location>
        <begin position="109"/>
        <end position="111"/>
    </location>
</feature>
<feature type="strand" evidence="13">
    <location>
        <begin position="112"/>
        <end position="116"/>
    </location>
</feature>
<feature type="strand" evidence="13">
    <location>
        <begin position="121"/>
        <end position="123"/>
    </location>
</feature>
<feature type="helix" evidence="13">
    <location>
        <begin position="124"/>
        <end position="127"/>
    </location>
</feature>
<feature type="helix" evidence="13">
    <location>
        <begin position="129"/>
        <end position="133"/>
    </location>
</feature>
<feature type="turn" evidence="13">
    <location>
        <begin position="135"/>
        <end position="138"/>
    </location>
</feature>
<feature type="helix" evidence="13">
    <location>
        <begin position="142"/>
        <end position="150"/>
    </location>
</feature>
<feature type="helix" evidence="13">
    <location>
        <begin position="153"/>
        <end position="162"/>
    </location>
</feature>
<feature type="strand" evidence="12">
    <location>
        <begin position="167"/>
        <end position="171"/>
    </location>
</feature>
<feature type="helix" evidence="13">
    <location>
        <begin position="172"/>
        <end position="183"/>
    </location>
</feature>
<feature type="helix" evidence="13">
    <location>
        <begin position="192"/>
        <end position="197"/>
    </location>
</feature>
<feature type="helix" evidence="13">
    <location>
        <begin position="201"/>
        <end position="203"/>
    </location>
</feature>
<feature type="helix" evidence="13">
    <location>
        <begin position="206"/>
        <end position="217"/>
    </location>
</feature>
<feature type="helix" evidence="13">
    <location>
        <begin position="220"/>
        <end position="222"/>
    </location>
</feature>
<feature type="turn" evidence="13">
    <location>
        <begin position="227"/>
        <end position="229"/>
    </location>
</feature>
<feature type="strand" evidence="13">
    <location>
        <begin position="230"/>
        <end position="232"/>
    </location>
</feature>
<feature type="strand" evidence="13">
    <location>
        <begin position="234"/>
        <end position="236"/>
    </location>
</feature>
<feature type="strand" evidence="13">
    <location>
        <begin position="239"/>
        <end position="241"/>
    </location>
</feature>
<feature type="turn" evidence="13">
    <location>
        <begin position="245"/>
        <end position="247"/>
    </location>
</feature>
<feature type="turn" evidence="12">
    <location>
        <begin position="253"/>
        <end position="255"/>
    </location>
</feature>
<feature type="helix" evidence="13">
    <location>
        <begin position="256"/>
        <end position="259"/>
    </location>
</feature>
<feature type="helix" evidence="13">
    <location>
        <begin position="262"/>
        <end position="264"/>
    </location>
</feature>
<feature type="strand" evidence="13">
    <location>
        <begin position="267"/>
        <end position="269"/>
    </location>
</feature>
<feature type="helix" evidence="13">
    <location>
        <begin position="276"/>
        <end position="278"/>
    </location>
</feature>
<feature type="turn" evidence="13">
    <location>
        <begin position="283"/>
        <end position="286"/>
    </location>
</feature>
<feature type="helix" evidence="13">
    <location>
        <begin position="291"/>
        <end position="303"/>
    </location>
</feature>
<feature type="helix" evidence="13">
    <location>
        <begin position="309"/>
        <end position="320"/>
    </location>
</feature>
<accession>P14532</accession>
<accession>Q51369</accession>